<dbReference type="EMBL" id="L04302">
    <property type="protein sequence ID" value="AAA40497.1"/>
    <property type="molecule type" value="mRNA"/>
</dbReference>
<dbReference type="EMBL" id="L24434">
    <property type="protein sequence ID" value="AAA40433.1"/>
    <property type="molecule type" value="mRNA"/>
</dbReference>
<dbReference type="EMBL" id="CH466547">
    <property type="protein sequence ID" value="EDL15225.1"/>
    <property type="molecule type" value="Genomic_DNA"/>
</dbReference>
<dbReference type="EMBL" id="BC053023">
    <property type="protein sequence ID" value="AAH53023.1"/>
    <property type="molecule type" value="mRNA"/>
</dbReference>
<dbReference type="EMBL" id="M86620">
    <property type="protein sequence ID" value="AAA40430.1"/>
    <property type="molecule type" value="Genomic_DNA"/>
</dbReference>
<dbReference type="EMBL" id="M86611">
    <property type="protein sequence ID" value="AAA40430.1"/>
    <property type="status" value="JOINED"/>
    <property type="molecule type" value="Genomic_DNA"/>
</dbReference>
<dbReference type="EMBL" id="M86612">
    <property type="protein sequence ID" value="AAA40430.1"/>
    <property type="status" value="JOINED"/>
    <property type="molecule type" value="Genomic_DNA"/>
</dbReference>
<dbReference type="EMBL" id="M86613">
    <property type="protein sequence ID" value="AAA40430.1"/>
    <property type="status" value="JOINED"/>
    <property type="molecule type" value="Genomic_DNA"/>
</dbReference>
<dbReference type="EMBL" id="M86614">
    <property type="protein sequence ID" value="AAA40430.1"/>
    <property type="status" value="JOINED"/>
    <property type="molecule type" value="Genomic_DNA"/>
</dbReference>
<dbReference type="EMBL" id="M86615">
    <property type="protein sequence ID" value="AAA40430.1"/>
    <property type="status" value="JOINED"/>
    <property type="molecule type" value="Genomic_DNA"/>
</dbReference>
<dbReference type="EMBL" id="M86616">
    <property type="protein sequence ID" value="AAA40430.1"/>
    <property type="status" value="JOINED"/>
    <property type="molecule type" value="Genomic_DNA"/>
</dbReference>
<dbReference type="EMBL" id="M86617">
    <property type="protein sequence ID" value="AAA40430.1"/>
    <property type="status" value="JOINED"/>
    <property type="molecule type" value="Genomic_DNA"/>
</dbReference>
<dbReference type="EMBL" id="M86618">
    <property type="protein sequence ID" value="AAA40430.1"/>
    <property type="status" value="JOINED"/>
    <property type="molecule type" value="Genomic_DNA"/>
</dbReference>
<dbReference type="EMBL" id="M86619">
    <property type="protein sequence ID" value="AAA40430.1"/>
    <property type="status" value="JOINED"/>
    <property type="molecule type" value="Genomic_DNA"/>
</dbReference>
<dbReference type="EMBL" id="U16175">
    <property type="protein sequence ID" value="AAA98537.1"/>
    <property type="molecule type" value="Genomic_DNA"/>
</dbReference>
<dbReference type="EMBL" id="U66257">
    <property type="protein sequence ID" value="AAC52819.1"/>
    <property type="molecule type" value="Genomic_DNA"/>
</dbReference>
<dbReference type="CCDS" id="CCDS17495.1"/>
<dbReference type="PIR" id="A46016">
    <property type="entry name" value="A46016"/>
</dbReference>
<dbReference type="RefSeq" id="NP_038719.2">
    <property type="nucleotide sequence ID" value="NM_013691.3"/>
</dbReference>
<dbReference type="SMR" id="Q05895"/>
<dbReference type="BioGRID" id="204177">
    <property type="interactions" value="1"/>
</dbReference>
<dbReference type="ComplexPortal" id="CPX-3024">
    <property type="entry name" value="Thrombospondin 3 complex"/>
</dbReference>
<dbReference type="FunCoup" id="Q05895">
    <property type="interactions" value="923"/>
</dbReference>
<dbReference type="STRING" id="10090.ENSMUSP00000029682"/>
<dbReference type="GlyCosmos" id="Q05895">
    <property type="glycosylation" value="4 sites, No reported glycans"/>
</dbReference>
<dbReference type="GlyGen" id="Q05895">
    <property type="glycosylation" value="4 sites, 2 N-linked glycans (2 sites)"/>
</dbReference>
<dbReference type="PhosphoSitePlus" id="Q05895"/>
<dbReference type="jPOST" id="Q05895"/>
<dbReference type="PaxDb" id="10090-ENSMUSP00000029682"/>
<dbReference type="ProteomicsDB" id="297729"/>
<dbReference type="Pumba" id="Q05895"/>
<dbReference type="Antibodypedia" id="34176">
    <property type="antibodies" value="201 antibodies from 29 providers"/>
</dbReference>
<dbReference type="DNASU" id="21827"/>
<dbReference type="Ensembl" id="ENSMUST00000029682.11">
    <property type="protein sequence ID" value="ENSMUSP00000029682.5"/>
    <property type="gene ID" value="ENSMUSG00000028047.12"/>
</dbReference>
<dbReference type="GeneID" id="21827"/>
<dbReference type="KEGG" id="mmu:21827"/>
<dbReference type="UCSC" id="uc008pyg.2">
    <property type="organism name" value="mouse"/>
</dbReference>
<dbReference type="AGR" id="MGI:98739"/>
<dbReference type="CTD" id="7059"/>
<dbReference type="MGI" id="MGI:98739">
    <property type="gene designation" value="Thbs3"/>
</dbReference>
<dbReference type="VEuPathDB" id="HostDB:ENSMUSG00000028047"/>
<dbReference type="eggNOG" id="ENOG502QRK8">
    <property type="taxonomic scope" value="Eukaryota"/>
</dbReference>
<dbReference type="GeneTree" id="ENSGT00940000159283"/>
<dbReference type="InParanoid" id="Q05895"/>
<dbReference type="OMA" id="NCPLARN"/>
<dbReference type="OrthoDB" id="14563at2759"/>
<dbReference type="PhylomeDB" id="Q05895"/>
<dbReference type="TreeFam" id="TF324917"/>
<dbReference type="Reactome" id="R-MMU-186797">
    <property type="pathway name" value="Signaling by PDGF"/>
</dbReference>
<dbReference type="BioGRID-ORCS" id="21827">
    <property type="hits" value="2 hits in 77 CRISPR screens"/>
</dbReference>
<dbReference type="ChiTaRS" id="Thbs3">
    <property type="organism name" value="mouse"/>
</dbReference>
<dbReference type="PRO" id="PR:Q05895"/>
<dbReference type="Proteomes" id="UP000000589">
    <property type="component" value="Chromosome 3"/>
</dbReference>
<dbReference type="RNAct" id="Q05895">
    <property type="molecule type" value="protein"/>
</dbReference>
<dbReference type="Bgee" id="ENSMUSG00000028047">
    <property type="expression patterns" value="Expressed in ventricular zone and 206 other cell types or tissues"/>
</dbReference>
<dbReference type="ExpressionAtlas" id="Q05895">
    <property type="expression patterns" value="baseline and differential"/>
</dbReference>
<dbReference type="GO" id="GO:0005576">
    <property type="term" value="C:extracellular region"/>
    <property type="evidence" value="ECO:0007669"/>
    <property type="project" value="InterPro"/>
</dbReference>
<dbReference type="GO" id="GO:0048471">
    <property type="term" value="C:perinuclear region of cytoplasm"/>
    <property type="evidence" value="ECO:0007669"/>
    <property type="project" value="Ensembl"/>
</dbReference>
<dbReference type="GO" id="GO:0005509">
    <property type="term" value="F:calcium ion binding"/>
    <property type="evidence" value="ECO:0007669"/>
    <property type="project" value="InterPro"/>
</dbReference>
<dbReference type="GO" id="GO:0008201">
    <property type="term" value="F:heparin binding"/>
    <property type="evidence" value="ECO:0000266"/>
    <property type="project" value="MGI"/>
</dbReference>
<dbReference type="GO" id="GO:0060346">
    <property type="term" value="P:bone trabecula formation"/>
    <property type="evidence" value="ECO:0000315"/>
    <property type="project" value="MGI"/>
</dbReference>
<dbReference type="GO" id="GO:0007155">
    <property type="term" value="P:cell adhesion"/>
    <property type="evidence" value="ECO:0007669"/>
    <property type="project" value="UniProtKB-KW"/>
</dbReference>
<dbReference type="GO" id="GO:0003417">
    <property type="term" value="P:growth plate cartilage development"/>
    <property type="evidence" value="ECO:0000315"/>
    <property type="project" value="MGI"/>
</dbReference>
<dbReference type="GO" id="GO:0043931">
    <property type="term" value="P:ossification involved in bone maturation"/>
    <property type="evidence" value="ECO:0000315"/>
    <property type="project" value="MGI"/>
</dbReference>
<dbReference type="CDD" id="cd00054">
    <property type="entry name" value="EGF_CA"/>
    <property type="match status" value="2"/>
</dbReference>
<dbReference type="CDD" id="cd16079">
    <property type="entry name" value="TSP-3cc"/>
    <property type="match status" value="1"/>
</dbReference>
<dbReference type="FunFam" id="4.10.1080.10:FF:000004">
    <property type="entry name" value="Cartilage oligomeric matrix protein"/>
    <property type="match status" value="1"/>
</dbReference>
<dbReference type="FunFam" id="2.10.25.10:FF:000025">
    <property type="entry name" value="Thrombospondin 3"/>
    <property type="match status" value="1"/>
</dbReference>
<dbReference type="FunFam" id="2.10.25.10:FF:000027">
    <property type="entry name" value="Thrombospondin 3"/>
    <property type="match status" value="1"/>
</dbReference>
<dbReference type="FunFam" id="2.60.120.200:FF:000002">
    <property type="entry name" value="Thrombospondin 3"/>
    <property type="match status" value="1"/>
</dbReference>
<dbReference type="FunFam" id="4.10.1080.10:FF:000001">
    <property type="entry name" value="Thrombospondin 3"/>
    <property type="match status" value="1"/>
</dbReference>
<dbReference type="FunFam" id="2.10.25.10:FF:000170">
    <property type="entry name" value="thrombospondin-3 isoform X1"/>
    <property type="match status" value="1"/>
</dbReference>
<dbReference type="FunFam" id="2.10.25.10:FF:000232">
    <property type="entry name" value="thrombospondin-3 isoform X1"/>
    <property type="match status" value="1"/>
</dbReference>
<dbReference type="FunFam" id="2.60.120.200:FF:000038">
    <property type="entry name" value="thrombospondin-3 isoform X1"/>
    <property type="match status" value="1"/>
</dbReference>
<dbReference type="FunFam" id="1.20.5.10:FF:000001">
    <property type="entry name" value="thrombospondin-3 isoform X2"/>
    <property type="match status" value="1"/>
</dbReference>
<dbReference type="Gene3D" id="1.20.5.10">
    <property type="match status" value="1"/>
</dbReference>
<dbReference type="Gene3D" id="2.60.120.200">
    <property type="match status" value="2"/>
</dbReference>
<dbReference type="Gene3D" id="2.10.25.10">
    <property type="entry name" value="Laminin"/>
    <property type="match status" value="4"/>
</dbReference>
<dbReference type="Gene3D" id="4.10.1080.10">
    <property type="entry name" value="TSP type-3 repeat"/>
    <property type="match status" value="2"/>
</dbReference>
<dbReference type="InterPro" id="IPR013320">
    <property type="entry name" value="ConA-like_dom_sf"/>
</dbReference>
<dbReference type="InterPro" id="IPR001881">
    <property type="entry name" value="EGF-like_Ca-bd_dom"/>
</dbReference>
<dbReference type="InterPro" id="IPR000742">
    <property type="entry name" value="EGF-like_dom"/>
</dbReference>
<dbReference type="InterPro" id="IPR018097">
    <property type="entry name" value="EGF_Ca-bd_CS"/>
</dbReference>
<dbReference type="InterPro" id="IPR049883">
    <property type="entry name" value="NOTCH1_EGF-like"/>
</dbReference>
<dbReference type="InterPro" id="IPR003367">
    <property type="entry name" value="Thrombospondin_3-like_rpt"/>
</dbReference>
<dbReference type="InterPro" id="IPR017897">
    <property type="entry name" value="Thrombospondin_3_rpt"/>
</dbReference>
<dbReference type="InterPro" id="IPR008859">
    <property type="entry name" value="Thrombospondin_C"/>
</dbReference>
<dbReference type="InterPro" id="IPR024665">
    <property type="entry name" value="TSP/COMP_coiled-coil"/>
</dbReference>
<dbReference type="InterPro" id="IPR046970">
    <property type="entry name" value="TSP/COMP_coiled-coil_sf"/>
</dbReference>
<dbReference type="InterPro" id="IPR028507">
    <property type="entry name" value="TSP3_coiled-coil"/>
</dbReference>
<dbReference type="InterPro" id="IPR028974">
    <property type="entry name" value="TSP_type-3_rpt"/>
</dbReference>
<dbReference type="InterPro" id="IPR048287">
    <property type="entry name" value="TSPN-like_N"/>
</dbReference>
<dbReference type="PANTHER" id="PTHR10199">
    <property type="entry name" value="THROMBOSPONDIN"/>
    <property type="match status" value="1"/>
</dbReference>
<dbReference type="PANTHER" id="PTHR10199:SF89">
    <property type="entry name" value="THROMBOSPONDIN-3"/>
    <property type="match status" value="1"/>
</dbReference>
<dbReference type="Pfam" id="PF11598">
    <property type="entry name" value="COMP"/>
    <property type="match status" value="1"/>
</dbReference>
<dbReference type="Pfam" id="PF07645">
    <property type="entry name" value="EGF_CA"/>
    <property type="match status" value="2"/>
</dbReference>
<dbReference type="Pfam" id="PF02412">
    <property type="entry name" value="TSP_3"/>
    <property type="match status" value="5"/>
</dbReference>
<dbReference type="Pfam" id="PF05735">
    <property type="entry name" value="TSP_C"/>
    <property type="match status" value="1"/>
</dbReference>
<dbReference type="SMART" id="SM00181">
    <property type="entry name" value="EGF"/>
    <property type="match status" value="4"/>
</dbReference>
<dbReference type="SMART" id="SM00179">
    <property type="entry name" value="EGF_CA"/>
    <property type="match status" value="2"/>
</dbReference>
<dbReference type="SMART" id="SM00210">
    <property type="entry name" value="TSPN"/>
    <property type="match status" value="1"/>
</dbReference>
<dbReference type="SUPFAM" id="SSF58006">
    <property type="entry name" value="Assembly domain of cartilage oligomeric matrix protein"/>
    <property type="match status" value="1"/>
</dbReference>
<dbReference type="SUPFAM" id="SSF49899">
    <property type="entry name" value="Concanavalin A-like lectins/glucanases"/>
    <property type="match status" value="2"/>
</dbReference>
<dbReference type="SUPFAM" id="SSF57196">
    <property type="entry name" value="EGF/Laminin"/>
    <property type="match status" value="1"/>
</dbReference>
<dbReference type="SUPFAM" id="SSF103647">
    <property type="entry name" value="TSP type-3 repeat"/>
    <property type="match status" value="3"/>
</dbReference>
<dbReference type="PROSITE" id="PS01186">
    <property type="entry name" value="EGF_2"/>
    <property type="match status" value="1"/>
</dbReference>
<dbReference type="PROSITE" id="PS50026">
    <property type="entry name" value="EGF_3"/>
    <property type="match status" value="3"/>
</dbReference>
<dbReference type="PROSITE" id="PS01187">
    <property type="entry name" value="EGF_CA"/>
    <property type="match status" value="2"/>
</dbReference>
<dbReference type="PROSITE" id="PS51234">
    <property type="entry name" value="TSP3"/>
    <property type="match status" value="8"/>
</dbReference>
<dbReference type="PROSITE" id="PS51236">
    <property type="entry name" value="TSP_CTER"/>
    <property type="match status" value="1"/>
</dbReference>
<feature type="signal peptide" evidence="5">
    <location>
        <begin position="1"/>
        <end position="21"/>
    </location>
</feature>
<feature type="chain" id="PRO_0000035850" description="Thrombospondin-3">
    <location>
        <begin position="22"/>
        <end position="956"/>
    </location>
</feature>
<feature type="domain" description="Laminin G-like">
    <location>
        <begin position="22"/>
        <end position="193"/>
    </location>
</feature>
<feature type="domain" description="EGF-like 1; calcium-binding" evidence="2">
    <location>
        <begin position="316"/>
        <end position="354"/>
    </location>
</feature>
<feature type="domain" description="EGF-like 2; calcium-binding" evidence="2">
    <location>
        <begin position="370"/>
        <end position="410"/>
    </location>
</feature>
<feature type="domain" description="EGF-like 3" evidence="2">
    <location>
        <begin position="414"/>
        <end position="456"/>
    </location>
</feature>
<feature type="repeat" description="TSP type-3 1">
    <location>
        <begin position="457"/>
        <end position="491"/>
    </location>
</feature>
<feature type="repeat" description="TSP type-3 2">
    <location>
        <begin position="492"/>
        <end position="527"/>
    </location>
</feature>
<feature type="repeat" description="TSP type-3 3">
    <location>
        <begin position="528"/>
        <end position="550"/>
    </location>
</feature>
<feature type="repeat" description="TSP type-3 4">
    <location>
        <begin position="551"/>
        <end position="586"/>
    </location>
</feature>
<feature type="repeat" description="TSP type-3 5">
    <location>
        <begin position="587"/>
        <end position="609"/>
    </location>
</feature>
<feature type="repeat" description="TSP type-3 6">
    <location>
        <begin position="610"/>
        <end position="647"/>
    </location>
</feature>
<feature type="repeat" description="TSP type-3 7">
    <location>
        <begin position="648"/>
        <end position="687"/>
    </location>
</feature>
<feature type="repeat" description="TSP type-3 8">
    <location>
        <begin position="688"/>
        <end position="723"/>
    </location>
</feature>
<feature type="domain" description="TSP C-terminal" evidence="3">
    <location>
        <begin position="727"/>
        <end position="941"/>
    </location>
</feature>
<feature type="region of interest" description="Disordered" evidence="4">
    <location>
        <begin position="518"/>
        <end position="537"/>
    </location>
</feature>
<feature type="region of interest" description="Disordered" evidence="4">
    <location>
        <begin position="546"/>
        <end position="699"/>
    </location>
</feature>
<feature type="compositionally biased region" description="Acidic residues" evidence="4">
    <location>
        <begin position="555"/>
        <end position="568"/>
    </location>
</feature>
<feature type="compositionally biased region" description="Acidic residues" evidence="4">
    <location>
        <begin position="612"/>
        <end position="628"/>
    </location>
</feature>
<feature type="compositionally biased region" description="Acidic residues" evidence="4">
    <location>
        <begin position="650"/>
        <end position="667"/>
    </location>
</feature>
<feature type="glycosylation site" description="N-linked (GlcNAc...) asparagine" evidence="1">
    <location>
        <position position="310"/>
    </location>
</feature>
<feature type="glycosylation site" description="N-linked (GlcNAc...) asparagine" evidence="1">
    <location>
        <position position="407"/>
    </location>
</feature>
<feature type="glycosylation site" description="N-linked (GlcNAc...) asparagine" evidence="1">
    <location>
        <position position="644"/>
    </location>
</feature>
<feature type="glycosylation site" description="N-linked (GlcNAc...) asparagine" evidence="1">
    <location>
        <position position="937"/>
    </location>
</feature>
<feature type="disulfide bond" description="Interchain" evidence="6">
    <location>
        <position position="266"/>
    </location>
</feature>
<feature type="disulfide bond" description="Interchain" evidence="6">
    <location>
        <position position="269"/>
    </location>
</feature>
<feature type="disulfide bond" evidence="2">
    <location>
        <begin position="278"/>
        <end position="289"/>
    </location>
</feature>
<feature type="disulfide bond" evidence="2">
    <location>
        <begin position="283"/>
        <end position="300"/>
    </location>
</feature>
<feature type="disulfide bond" evidence="2">
    <location>
        <begin position="303"/>
        <end position="314"/>
    </location>
</feature>
<feature type="disulfide bond" evidence="2">
    <location>
        <begin position="320"/>
        <end position="332"/>
    </location>
</feature>
<feature type="disulfide bond" evidence="2">
    <location>
        <begin position="326"/>
        <end position="341"/>
    </location>
</feature>
<feature type="disulfide bond" evidence="2">
    <location>
        <begin position="344"/>
        <end position="368"/>
    </location>
</feature>
<feature type="disulfide bond" evidence="2">
    <location>
        <begin position="374"/>
        <end position="388"/>
    </location>
</feature>
<feature type="disulfide bond" evidence="2">
    <location>
        <begin position="382"/>
        <end position="397"/>
    </location>
</feature>
<feature type="disulfide bond" evidence="2">
    <location>
        <begin position="400"/>
        <end position="412"/>
    </location>
</feature>
<feature type="disulfide bond" evidence="2">
    <location>
        <begin position="418"/>
        <end position="432"/>
    </location>
</feature>
<feature type="disulfide bond" evidence="2">
    <location>
        <begin position="426"/>
        <end position="442"/>
    </location>
</feature>
<feature type="disulfide bond" evidence="2">
    <location>
        <begin position="444"/>
        <end position="455"/>
    </location>
</feature>
<feature type="disulfide bond" evidence="2">
    <location>
        <begin position="471"/>
        <end position="478"/>
    </location>
</feature>
<feature type="disulfide bond" evidence="2">
    <location>
        <begin position="483"/>
        <end position="503"/>
    </location>
</feature>
<feature type="disulfide bond" evidence="2">
    <location>
        <begin position="519"/>
        <end position="539"/>
    </location>
</feature>
<feature type="disulfide bond" evidence="2">
    <location>
        <begin position="542"/>
        <end position="562"/>
    </location>
</feature>
<feature type="disulfide bond" evidence="2">
    <location>
        <begin position="578"/>
        <end position="598"/>
    </location>
</feature>
<feature type="disulfide bond" evidence="2">
    <location>
        <begin position="601"/>
        <end position="621"/>
    </location>
</feature>
<feature type="disulfide bond" evidence="2">
    <location>
        <begin position="639"/>
        <end position="659"/>
    </location>
</feature>
<feature type="disulfide bond" evidence="2">
    <location>
        <begin position="679"/>
        <end position="699"/>
    </location>
</feature>
<feature type="disulfide bond" evidence="2">
    <location>
        <begin position="715"/>
        <end position="936"/>
    </location>
</feature>
<feature type="sequence conflict" description="In Ref. 2; AAA40433." evidence="6" ref="2">
    <original>L</original>
    <variation>F</variation>
    <location>
        <position position="433"/>
    </location>
</feature>
<feature type="sequence conflict" description="In Ref. 1; AAA40497 and 5; AAA40430." evidence="6" ref="1 5">
    <original>D</original>
    <variation>N</variation>
    <location>
        <position position="563"/>
    </location>
</feature>
<feature type="sequence conflict" description="In Ref. 1; AAA40497 and 5; AAA40430." evidence="6" ref="1 5">
    <original>E</original>
    <variation>G</variation>
    <location>
        <position position="720"/>
    </location>
</feature>
<feature type="sequence conflict" description="In Ref. 1; AAA40497 and 5; AAA40430." evidence="6" ref="1 5">
    <original>W</original>
    <variation>L</variation>
    <location>
        <position position="871"/>
    </location>
</feature>
<sequence length="956" mass="104119">MEKPELWGVLALLLLCSYTCGSQDLQVIDLLTVGESRQMVAVAEKIRTALLTAGDIYLLSTFRLPPKQGGVLFGLYSRQDNTRWLEASVVGKINKVLVRYQREDGKVHAVNLQQAGLADGRTHTALLRLRGPSRPSPGLQLYVDCKLGDQHAGLPALAPIPPAEVSGLEIRTGQKAYLRMQGFVESMKIILGGSMARVGALSECPFQGDDSIHNAVTSALQSILGEQTKALVTQLTLFNQILVELRDDIRDQVKEMSLIRNTIMECQVCGFHEQRSHCSPSPCFRGVDCMEVYEYPGYRCGPCPPGLQGNGTHCDDINECAHADPCFPGSSCINTMPGFHCEACPPGYKGTRVSGVGIDYARASKQVCNDIDECNDGNNGGCDPNSICTNTVGSFKCGPCRLGFLGNQSQGCVPARTCHSPAHSPCHIHAHCLFERNGAVSCQCNVGWAGNGNVCGPDTDIDGYPDQALPCMDNNKHCKQDNCLLTPNSGQEDADNDGVGDQCDDDADGDGIKNVEDNCRLFPNKDQQNSDTDSFGDACDNCPNVPNNDQKDTDGNGEGDACDNDVDGDGIPNGLDNCPKVPNPLQTDRDEDGVGDACDSCPEMSNPTQTDADSDLVGDVCDTNEDSDGDGHQDTKDNCPQLPNSSQLDSDNDGLGDECDGDDDNDGVPDYIPPGPDNCRLVPNPNQKDSDGNGVGDVCEDDFDNDAVVDPLDVCPESAEVTLTDFRAYQTVILDPEGDAQIDPNWVVLNQGMEIVQTMNSDPGLAVGYTAFNGVDFEGTFHVNTVTDDDYAGFLFSYQDSGRFYVVMWKQTEQTYWQATPFRAVAQPGLQLKAVTSISGPGEHLRNALWHTGHTPDQVRLLWTDPRNVGWRDKTSYRWRLLHRPQVGYIRVKLYEGPQLVADSGVIIDTSMRGGRLGVFCFSQENIIWSNLQYRCNDTVPEDFEPFRRQLLQGRV</sequence>
<keyword id="KW-0106">Calcium</keyword>
<keyword id="KW-0130">Cell adhesion</keyword>
<keyword id="KW-0903">Direct protein sequencing</keyword>
<keyword id="KW-1015">Disulfide bond</keyword>
<keyword id="KW-0245">EGF-like domain</keyword>
<keyword id="KW-0325">Glycoprotein</keyword>
<keyword id="KW-1185">Reference proteome</keyword>
<keyword id="KW-0677">Repeat</keyword>
<keyword id="KW-0732">Signal</keyword>
<comment type="function">
    <text>Adhesive glycoprotein that mediates cell-to-cell and cell-to-matrix interactions. Can bind to fibrinogen, fibronectin, laminin and type V collagen.</text>
</comment>
<comment type="subunit">
    <text>Oligomer; disulfide-linked.</text>
</comment>
<comment type="tissue specificity">
    <text>Brain, lung and cartilage.</text>
</comment>
<comment type="similarity">
    <text evidence="6">Belongs to the thrombospondin family.</text>
</comment>
<evidence type="ECO:0000255" key="1"/>
<evidence type="ECO:0000255" key="2">
    <source>
        <dbReference type="PROSITE-ProRule" id="PRU00076"/>
    </source>
</evidence>
<evidence type="ECO:0000255" key="3">
    <source>
        <dbReference type="PROSITE-ProRule" id="PRU00635"/>
    </source>
</evidence>
<evidence type="ECO:0000256" key="4">
    <source>
        <dbReference type="SAM" id="MobiDB-lite"/>
    </source>
</evidence>
<evidence type="ECO:0000269" key="5">
    <source>
    </source>
</evidence>
<evidence type="ECO:0000305" key="6"/>
<organism>
    <name type="scientific">Mus musculus</name>
    <name type="common">Mouse</name>
    <dbReference type="NCBI Taxonomy" id="10090"/>
    <lineage>
        <taxon>Eukaryota</taxon>
        <taxon>Metazoa</taxon>
        <taxon>Chordata</taxon>
        <taxon>Craniata</taxon>
        <taxon>Vertebrata</taxon>
        <taxon>Euteleostomi</taxon>
        <taxon>Mammalia</taxon>
        <taxon>Eutheria</taxon>
        <taxon>Euarchontoglires</taxon>
        <taxon>Glires</taxon>
        <taxon>Rodentia</taxon>
        <taxon>Myomorpha</taxon>
        <taxon>Muroidea</taxon>
        <taxon>Muridae</taxon>
        <taxon>Murinae</taxon>
        <taxon>Mus</taxon>
        <taxon>Mus</taxon>
    </lineage>
</organism>
<name>TSP3_MOUSE</name>
<accession>Q05895</accession>
<accession>Q6LCE0</accession>
<accession>Q7TN15</accession>
<gene>
    <name type="primary">Thbs3</name>
    <name type="synonym">Tsp3</name>
</gene>
<protein>
    <recommendedName>
        <fullName>Thrombospondin-3</fullName>
    </recommendedName>
</protein>
<proteinExistence type="evidence at protein level"/>
<reference key="1">
    <citation type="journal article" date="1993" name="Genomics">
        <title>Isolation and characterization of the mouse thrombospondin 3 (Thbs3) gene.</title>
        <authorList>
            <person name="Bornstein P."/>
            <person name="Devarayalu S."/>
            <person name="Edelhoff S."/>
            <person name="Disteche C.M."/>
        </authorList>
    </citation>
    <scope>NUCLEOTIDE SEQUENCE [MRNA]</scope>
    <source>
        <strain>C57BL/6 X CBA</strain>
        <tissue>Lung</tissue>
    </source>
</reference>
<reference key="2">
    <citation type="journal article" date="1994" name="J. Biol. Chem.">
        <title>Thrombospondin 3 is a developmentally regulated heparin binding protein.</title>
        <authorList>
            <person name="Qabar A.N."/>
            <person name="Lin Z."/>
            <person name="Wolf F.W."/>
            <person name="O'Shea K.S."/>
            <person name="Lawler J."/>
            <person name="Dixit V.M."/>
        </authorList>
    </citation>
    <scope>NUCLEOTIDE SEQUENCE [MRNA]</scope>
</reference>
<reference key="3">
    <citation type="submission" date="2005-07" db="EMBL/GenBank/DDBJ databases">
        <authorList>
            <person name="Mural R.J."/>
            <person name="Adams M.D."/>
            <person name="Myers E.W."/>
            <person name="Smith H.O."/>
            <person name="Venter J.C."/>
        </authorList>
    </citation>
    <scope>NUCLEOTIDE SEQUENCE [LARGE SCALE GENOMIC DNA]</scope>
</reference>
<reference key="4">
    <citation type="journal article" date="2004" name="Genome Res.">
        <title>The status, quality, and expansion of the NIH full-length cDNA project: the Mammalian Gene Collection (MGC).</title>
        <authorList>
            <consortium name="The MGC Project Team"/>
        </authorList>
    </citation>
    <scope>NUCLEOTIDE SEQUENCE [LARGE SCALE MRNA]</scope>
    <source>
        <strain>C57BL/6J</strain>
    </source>
</reference>
<reference key="5">
    <citation type="journal article" date="1992" name="J. Biol. Chem.">
        <title>Thrombospondin 3 (Thbs3), a new member of the thrombospondin gene family.</title>
        <authorList>
            <person name="Vos H.L."/>
            <person name="Devarayalu S."/>
            <person name="de Vries Y."/>
            <person name="Bornstein P."/>
        </authorList>
    </citation>
    <scope>NUCLEOTIDE SEQUENCE [GENOMIC DNA] OF 517-956</scope>
    <source>
        <strain>BALB/cJ</strain>
    </source>
</reference>
<reference key="6">
    <citation type="journal article" date="1995" name="Mamm. Genome">
        <title>A tightly organized, conserved gene cluster on mouse chromosome 3 (E3-F1).</title>
        <authorList>
            <person name="Vos H.L."/>
            <person name="Mockensturm-Wilson M."/>
            <person name="Rood P.M.L."/>
            <person name="Maas A.M."/>
            <person name="Duhig T."/>
            <person name="Gendler S.J."/>
            <person name="Bornstein P."/>
        </authorList>
    </citation>
    <scope>NUCLEOTIDE SEQUENCE [GENOMIC DNA] OF 834-956</scope>
    <source>
        <strain>BALB/cJ</strain>
    </source>
</reference>
<reference key="7">
    <citation type="journal article" date="1996" name="Nucleic Acids Res.">
        <title>SP1-binding elements, within the common metaxin-thrombospondin 3 intergenic region, participate in the regulation of the metaxin gene.</title>
        <authorList>
            <person name="Collins M."/>
            <person name="Bornstein P."/>
        </authorList>
    </citation>
    <scope>NUCLEOTIDE SEQUENCE [GENOMIC DNA] OF 1-26</scope>
</reference>
<reference key="8">
    <citation type="journal article" date="1996" name="FEBS Lett.">
        <title>Expression and initial characterization of recombinant mouse thrombospondin 1 and thrombospondin 3.</title>
        <authorList>
            <person name="Chen H."/>
            <person name="Aeschlimann D."/>
            <person name="Nowlen J."/>
            <person name="Mosher D.F."/>
        </authorList>
    </citation>
    <scope>PROTEIN SEQUENCE OF 22-32</scope>
</reference>
<reference key="9">
    <citation type="journal article" date="2010" name="Cell">
        <title>A tissue-specific atlas of mouse protein phosphorylation and expression.</title>
        <authorList>
            <person name="Huttlin E.L."/>
            <person name="Jedrychowski M.P."/>
            <person name="Elias J.E."/>
            <person name="Goswami T."/>
            <person name="Rad R."/>
            <person name="Beausoleil S.A."/>
            <person name="Villen J."/>
            <person name="Haas W."/>
            <person name="Sowa M.E."/>
            <person name="Gygi S.P."/>
        </authorList>
    </citation>
    <scope>IDENTIFICATION BY MASS SPECTROMETRY [LARGE SCALE ANALYSIS]</scope>
    <source>
        <tissue>Lung</tissue>
    </source>
</reference>